<comment type="tissue specificity">
    <text>Seed.</text>
</comment>
<comment type="developmental stage">
    <text>Most abundant mRNA species from cotyledons at early stages of development.</text>
</comment>
<sequence>MEFAHLTVLSLFCLAFVGITATSPREDYWQSIWPNTPLPKTFSDMLIPSGKTNSLPIKSEELKQYSTLFFEHDLHPRKNFILGNTNSVGSIIRPFTKSRQGVTDSIWLANKEKQSLEDFCYSPTAIAEHKHCVSSLKSMIDQVISHFGSTKIKAISSNFAPYQDQYVVEDVKKVGDNAVMCHRLNFEKVVFNCHQVRDTTAYVVSLVASDGTKTKALTVCHHDTRGMNPELLYEALEVTLGTVPVCHFIGNKAAAWVPNHTADNLCVM</sequence>
<accession>P21746</accession>
<keyword id="KW-0325">Glycoprotein</keyword>
<keyword id="KW-0677">Repeat</keyword>
<keyword id="KW-0732">Signal</keyword>
<feature type="signal peptide" evidence="1">
    <location>
        <begin position="1"/>
        <end position="22"/>
    </location>
</feature>
<feature type="chain" id="PRO_0000017349" description="Embryonic abundant protein USP87">
    <location>
        <begin position="23"/>
        <end position="268"/>
    </location>
</feature>
<feature type="repeat" description="1-1">
    <location>
        <begin position="50"/>
        <end position="55"/>
    </location>
</feature>
<feature type="domain" description="BURP" evidence="2">
    <location>
        <begin position="68"/>
        <end position="259"/>
    </location>
</feature>
<feature type="repeat" description="1-2">
    <location>
        <begin position="83"/>
        <end position="88"/>
    </location>
</feature>
<feature type="repeat" description="1-3">
    <location>
        <begin position="101"/>
        <end position="106"/>
    </location>
</feature>
<feature type="repeat" description="2-1">
    <location>
        <begin position="166"/>
        <end position="183"/>
    </location>
</feature>
<feature type="repeat" description="2-2">
    <location>
        <begin position="202"/>
        <end position="222"/>
    </location>
</feature>
<feature type="region of interest" description="3 X 6 AA approximate repeats">
    <location>
        <begin position="50"/>
        <end position="106"/>
    </location>
</feature>
<feature type="region of interest" description="2 X approximate repeats">
    <location>
        <begin position="166"/>
        <end position="222"/>
    </location>
</feature>
<feature type="glycosylation site" description="N-linked (GlcNAc...) asparagine" evidence="1">
    <location>
        <position position="259"/>
    </location>
</feature>
<organism>
    <name type="scientific">Vicia faba</name>
    <name type="common">Broad bean</name>
    <name type="synonym">Faba vulgaris</name>
    <dbReference type="NCBI Taxonomy" id="3906"/>
    <lineage>
        <taxon>Eukaryota</taxon>
        <taxon>Viridiplantae</taxon>
        <taxon>Streptophyta</taxon>
        <taxon>Embryophyta</taxon>
        <taxon>Tracheophyta</taxon>
        <taxon>Spermatophyta</taxon>
        <taxon>Magnoliopsida</taxon>
        <taxon>eudicotyledons</taxon>
        <taxon>Gunneridae</taxon>
        <taxon>Pentapetalae</taxon>
        <taxon>rosids</taxon>
        <taxon>fabids</taxon>
        <taxon>Fabales</taxon>
        <taxon>Fabaceae</taxon>
        <taxon>Papilionoideae</taxon>
        <taxon>50 kb inversion clade</taxon>
        <taxon>NPAAA clade</taxon>
        <taxon>Hologalegina</taxon>
        <taxon>IRL clade</taxon>
        <taxon>Fabeae</taxon>
        <taxon>Vicia</taxon>
    </lineage>
</organism>
<name>EA87_VICFA</name>
<dbReference type="EMBL" id="X13211">
    <property type="protein sequence ID" value="CAA31603.1"/>
    <property type="molecule type" value="mRNA"/>
</dbReference>
<dbReference type="PIR" id="S04135">
    <property type="entry name" value="S04135"/>
</dbReference>
<dbReference type="SMR" id="P21746"/>
<dbReference type="InterPro" id="IPR044816">
    <property type="entry name" value="BURP"/>
</dbReference>
<dbReference type="InterPro" id="IPR004873">
    <property type="entry name" value="BURP_dom"/>
</dbReference>
<dbReference type="PANTHER" id="PTHR31236:SF35">
    <property type="entry name" value="ABUNDANT PROTEIN, PUTATIVE-RELATED"/>
    <property type="match status" value="1"/>
</dbReference>
<dbReference type="PANTHER" id="PTHR31236">
    <property type="entry name" value="BURP DOMAIN PROTEIN USPL1-LIKE"/>
    <property type="match status" value="1"/>
</dbReference>
<dbReference type="Pfam" id="PF03181">
    <property type="entry name" value="BURP"/>
    <property type="match status" value="1"/>
</dbReference>
<dbReference type="SMART" id="SM01045">
    <property type="entry name" value="BURP"/>
    <property type="match status" value="1"/>
</dbReference>
<dbReference type="PROSITE" id="PS51277">
    <property type="entry name" value="BURP"/>
    <property type="match status" value="1"/>
</dbReference>
<proteinExistence type="evidence at transcript level"/>
<protein>
    <recommendedName>
        <fullName>Embryonic abundant protein USP87</fullName>
    </recommendedName>
</protein>
<reference key="1">
    <citation type="journal article" date="1988" name="Plant Mol. Biol.">
        <title>Abundant embryonic mRNA in field bean (Vicia faba L.) codes for a new class of seed proteins: cDNA cloning and characterization of the primary translation product.</title>
        <authorList>
            <person name="Bassuener R."/>
            <person name="Baeumlein H."/>
            <person name="Huth A."/>
            <person name="Jung R."/>
            <person name="Wobus U."/>
            <person name="Rapoport T.A."/>
            <person name="Saalbach G."/>
            <person name="Muentz K."/>
        </authorList>
        <dbReference type="AGRICOLA" id="IND92000056"/>
    </citation>
    <scope>NUCLEOTIDE SEQUENCE [MRNA]</scope>
    <source>
        <strain>cv. Fribo</strain>
        <tissue>Seed</tissue>
    </source>
</reference>
<evidence type="ECO:0000255" key="1"/>
<evidence type="ECO:0000255" key="2">
    <source>
        <dbReference type="PROSITE-ProRule" id="PRU00604"/>
    </source>
</evidence>